<dbReference type="EMBL" id="CP000753">
    <property type="protein sequence ID" value="ABS08664.1"/>
    <property type="molecule type" value="Genomic_DNA"/>
</dbReference>
<dbReference type="SMR" id="A6WPC5"/>
<dbReference type="KEGG" id="sbm:Shew185_2527"/>
<dbReference type="HOGENOM" id="CLU_063050_0_1_6"/>
<dbReference type="GO" id="GO:0043590">
    <property type="term" value="C:bacterial nucleoid"/>
    <property type="evidence" value="ECO:0007669"/>
    <property type="project" value="TreeGrafter"/>
</dbReference>
<dbReference type="GO" id="GO:0005737">
    <property type="term" value="C:cytoplasm"/>
    <property type="evidence" value="ECO:0007669"/>
    <property type="project" value="UniProtKB-UniRule"/>
</dbReference>
<dbReference type="GO" id="GO:0003690">
    <property type="term" value="F:double-stranded DNA binding"/>
    <property type="evidence" value="ECO:0007669"/>
    <property type="project" value="TreeGrafter"/>
</dbReference>
<dbReference type="GO" id="GO:0003727">
    <property type="term" value="F:single-stranded RNA binding"/>
    <property type="evidence" value="ECO:0007669"/>
    <property type="project" value="TreeGrafter"/>
</dbReference>
<dbReference type="HAMAP" id="MF_00730">
    <property type="entry name" value="NdpA"/>
    <property type="match status" value="1"/>
</dbReference>
<dbReference type="InterPro" id="IPR007358">
    <property type="entry name" value="Nucleoid_associated_NdpA"/>
</dbReference>
<dbReference type="NCBIfam" id="NF001557">
    <property type="entry name" value="PRK00378.1"/>
    <property type="match status" value="1"/>
</dbReference>
<dbReference type="PANTHER" id="PTHR38772">
    <property type="match status" value="1"/>
</dbReference>
<dbReference type="PANTHER" id="PTHR38772:SF1">
    <property type="entry name" value="NUCLEOID-ASSOCIATED PROTEIN YEJK"/>
    <property type="match status" value="1"/>
</dbReference>
<dbReference type="Pfam" id="PF04245">
    <property type="entry name" value="NA37"/>
    <property type="match status" value="1"/>
</dbReference>
<comment type="subcellular location">
    <subcellularLocation>
        <location evidence="1">Cytoplasm</location>
        <location evidence="1">Nucleoid</location>
    </subcellularLocation>
</comment>
<comment type="similarity">
    <text evidence="1">Belongs to the YejK family.</text>
</comment>
<reference key="1">
    <citation type="submission" date="2007-07" db="EMBL/GenBank/DDBJ databases">
        <title>Complete sequence of chromosome of Shewanella baltica OS185.</title>
        <authorList>
            <consortium name="US DOE Joint Genome Institute"/>
            <person name="Copeland A."/>
            <person name="Lucas S."/>
            <person name="Lapidus A."/>
            <person name="Barry K."/>
            <person name="Glavina del Rio T."/>
            <person name="Dalin E."/>
            <person name="Tice H."/>
            <person name="Pitluck S."/>
            <person name="Sims D."/>
            <person name="Brettin T."/>
            <person name="Bruce D."/>
            <person name="Detter J.C."/>
            <person name="Han C."/>
            <person name="Schmutz J."/>
            <person name="Larimer F."/>
            <person name="Land M."/>
            <person name="Hauser L."/>
            <person name="Kyrpides N."/>
            <person name="Mikhailova N."/>
            <person name="Brettar I."/>
            <person name="Rodrigues J."/>
            <person name="Konstantinidis K."/>
            <person name="Tiedje J."/>
            <person name="Richardson P."/>
        </authorList>
    </citation>
    <scope>NUCLEOTIDE SEQUENCE [LARGE SCALE GENOMIC DNA]</scope>
    <source>
        <strain>OS185</strain>
    </source>
</reference>
<organism>
    <name type="scientific">Shewanella baltica (strain OS185)</name>
    <dbReference type="NCBI Taxonomy" id="402882"/>
    <lineage>
        <taxon>Bacteria</taxon>
        <taxon>Pseudomonadati</taxon>
        <taxon>Pseudomonadota</taxon>
        <taxon>Gammaproteobacteria</taxon>
        <taxon>Alteromonadales</taxon>
        <taxon>Shewanellaceae</taxon>
        <taxon>Shewanella</taxon>
    </lineage>
</organism>
<name>NDPA_SHEB8</name>
<gene>
    <name type="ordered locus">Shew185_2527</name>
</gene>
<proteinExistence type="inferred from homology"/>
<evidence type="ECO:0000255" key="1">
    <source>
        <dbReference type="HAMAP-Rule" id="MF_00730"/>
    </source>
</evidence>
<keyword id="KW-0963">Cytoplasm</keyword>
<accession>A6WPC5</accession>
<protein>
    <recommendedName>
        <fullName evidence="1">Nucleoid-associated protein Shew185_2527</fullName>
    </recommendedName>
</protein>
<sequence length="342" mass="38083">MSINIEHAIIHEISQDSQGQLRCRLRPQPLLNGQAVEVMLDELHQTYTGKAGKGFGYFGIHGDDGEANPAFANALTQYRGGDLGFVEFSGQASKLLQEELSKYDFSQGGFLLMSCYTSITSDYLFVALLSAKSSMTVLDDMELSQNNHLDLNNIQLAARIDLTEWQADKDSRKYISFIRGRAGRKVADFFLDFMGCVEGVNTKAQNKTLMNAVEDFVASSELTKDERQQCRNKVFEYCSERFDEGADIEIKDLADELADQGMDSFYDFARGGSYDLDEEFPADKSTLRQLKKFSGTGGGVTLSFDGGHLGQRVIYDPISDTILIKGVPANLKDQLDRRLKGE</sequence>
<feature type="chain" id="PRO_1000045943" description="Nucleoid-associated protein Shew185_2527">
    <location>
        <begin position="1"/>
        <end position="342"/>
    </location>
</feature>